<keyword id="KW-0025">Alternative splicing</keyword>
<keyword id="KW-1015">Disulfide bond</keyword>
<keyword id="KW-0256">Endoplasmic reticulum</keyword>
<keyword id="KW-0325">Glycoprotein</keyword>
<keyword id="KW-0328">Glycosyltransferase</keyword>
<keyword id="KW-0333">Golgi apparatus</keyword>
<keyword id="KW-0458">Lysosome</keyword>
<keyword id="KW-0472">Membrane</keyword>
<keyword id="KW-1267">Proteomics identification</keyword>
<keyword id="KW-1185">Reference proteome</keyword>
<keyword id="KW-0735">Signal-anchor</keyword>
<keyword id="KW-0808">Transferase</keyword>
<keyword id="KW-0812">Transmembrane</keyword>
<keyword id="KW-1133">Transmembrane helix</keyword>
<evidence type="ECO:0000250" key="1">
    <source>
        <dbReference type="UniProtKB" id="Q11130"/>
    </source>
</evidence>
<evidence type="ECO:0000250" key="2">
    <source>
        <dbReference type="UniProtKB" id="Q5F2L2"/>
    </source>
</evidence>
<evidence type="ECO:0000255" key="3"/>
<evidence type="ECO:0000269" key="4">
    <source>
    </source>
</evidence>
<evidence type="ECO:0000269" key="5">
    <source>
    </source>
</evidence>
<evidence type="ECO:0000269" key="6">
    <source>
    </source>
</evidence>
<evidence type="ECO:0000269" key="7">
    <source>
    </source>
</evidence>
<evidence type="ECO:0000303" key="8">
    <source>
    </source>
</evidence>
<evidence type="ECO:0000303" key="9">
    <source>
    </source>
</evidence>
<evidence type="ECO:0000303" key="10">
    <source>
    </source>
</evidence>
<evidence type="ECO:0000303" key="11">
    <source>
    </source>
</evidence>
<evidence type="ECO:0000303" key="12">
    <source ref="2"/>
</evidence>
<evidence type="ECO:0000305" key="13"/>
<evidence type="ECO:0000305" key="14">
    <source>
    </source>
</evidence>
<evidence type="ECO:0000305" key="15">
    <source>
    </source>
</evidence>
<evidence type="ECO:0000312" key="16">
    <source>
        <dbReference type="HGNC" id="HGNC:19234"/>
    </source>
</evidence>
<gene>
    <name evidence="10 16" type="primary">FUT10</name>
    <name evidence="11" type="synonym">POFUT3</name>
</gene>
<accession>Q6P4F1</accession>
<accession>A8KAC8</accession>
<accession>Q70GG3</accession>
<accession>Q8IVI6</accession>
<accession>Q8IVI7</accession>
<accession>Q8IVJ3</accession>
<accession>Q8TE43</accession>
<accession>Q9BSR3</accession>
<sequence length="479" mass="56094">MVRIQRRKLLASCLCVTATVFLLVTLQVMVELGKFERKEFKSSSLQDGHTKMEEAPTHLNSFLKKEGLTFNRKRKWELDSYPIMLWWSPLTGETGRLGQCGADACFFTINRTYLHHHMTKAFLFYGTDFNIDSLPLPRKAHHDWAVFHEESPKNNYKLFHKPVITLFNYTATFSRHSHLPLTTQYLESIEVLKSLRYLVPLQSKNKLRKRLAPLVYVQSDCDPPSDRDSYVRELMTYIEVDSYGECLRNKDLPQQLKNPASMDADGFYRIIAQYKFILAFENAVCDDYITEKFWRPLKLGVVPVYYGSPSITDWLPSNKSAILVSEFSHPRELASYIRRLDSDDRLYEAYVEWKLKGEISNQRLLTALRERKWGVQDVNQDNYIDAFECMVCTKVWANIRLQEKGLPPKRWEAEDTHLSCPEPTVFAFSPLRTPPLSSLREMWISSFEQSKKEAQALRWLVDRNQNFSSQEFWGLVFKD</sequence>
<dbReference type="EC" id="2.4.1.221" evidence="7"/>
<dbReference type="EC" id="2.4.1.-" evidence="6"/>
<dbReference type="EMBL" id="AJ431184">
    <property type="protein sequence ID" value="CAD24023.1"/>
    <property type="status" value="ALT_INIT"/>
    <property type="molecule type" value="mRNA"/>
</dbReference>
<dbReference type="EMBL" id="AJ512465">
    <property type="protein sequence ID" value="CAD54669.1"/>
    <property type="molecule type" value="mRNA"/>
</dbReference>
<dbReference type="EMBL" id="AJ535838">
    <property type="protein sequence ID" value="CAD59771.1"/>
    <property type="molecule type" value="mRNA"/>
</dbReference>
<dbReference type="EMBL" id="AJ535839">
    <property type="protein sequence ID" value="CAD59772.1"/>
    <property type="molecule type" value="mRNA"/>
</dbReference>
<dbReference type="EMBL" id="AJ582015">
    <property type="protein sequence ID" value="CAE46499.1"/>
    <property type="molecule type" value="mRNA"/>
</dbReference>
<dbReference type="EMBL" id="AK292993">
    <property type="protein sequence ID" value="BAF85682.1"/>
    <property type="molecule type" value="mRNA"/>
</dbReference>
<dbReference type="EMBL" id="CH471080">
    <property type="protein sequence ID" value="EAW63404.1"/>
    <property type="molecule type" value="Genomic_DNA"/>
</dbReference>
<dbReference type="EMBL" id="BC004884">
    <property type="protein sequence ID" value="AAH04884.2"/>
    <property type="molecule type" value="mRNA"/>
</dbReference>
<dbReference type="EMBL" id="BC063462">
    <property type="protein sequence ID" value="AAH63462.1"/>
    <property type="molecule type" value="mRNA"/>
</dbReference>
<dbReference type="CCDS" id="CCDS6088.1">
    <molecule id="Q6P4F1-1"/>
</dbReference>
<dbReference type="RefSeq" id="NP_116053.3">
    <molecule id="Q6P4F1-1"/>
    <property type="nucleotide sequence ID" value="NM_032664.3"/>
</dbReference>
<dbReference type="SMR" id="Q6P4F1"/>
<dbReference type="BioGRID" id="124239">
    <property type="interactions" value="13"/>
</dbReference>
<dbReference type="FunCoup" id="Q6P4F1">
    <property type="interactions" value="1167"/>
</dbReference>
<dbReference type="IntAct" id="Q6P4F1">
    <property type="interactions" value="4"/>
</dbReference>
<dbReference type="STRING" id="9606.ENSP00000332757"/>
<dbReference type="BindingDB" id="Q6P4F1"/>
<dbReference type="ChEMBL" id="CHEMBL2926"/>
<dbReference type="CAZy" id="GT10">
    <property type="family name" value="Glycosyltransferase Family 10"/>
</dbReference>
<dbReference type="GlyCosmos" id="Q6P4F1">
    <property type="glycosylation" value="4 sites, 1 glycan"/>
</dbReference>
<dbReference type="GlyGen" id="Q6P4F1">
    <property type="glycosylation" value="7 sites, 1 N-linked glycan (1 site), 2 O-linked glycans (5 sites)"/>
</dbReference>
<dbReference type="iPTMnet" id="Q6P4F1"/>
<dbReference type="PhosphoSitePlus" id="Q6P4F1"/>
<dbReference type="BioMuta" id="FUT10"/>
<dbReference type="DMDM" id="156630455"/>
<dbReference type="jPOST" id="Q6P4F1"/>
<dbReference type="MassIVE" id="Q6P4F1"/>
<dbReference type="PaxDb" id="9606-ENSP00000332757"/>
<dbReference type="PeptideAtlas" id="Q6P4F1"/>
<dbReference type="Antibodypedia" id="23343">
    <property type="antibodies" value="172 antibodies from 23 providers"/>
</dbReference>
<dbReference type="DNASU" id="84750"/>
<dbReference type="Ensembl" id="ENST00000327671.10">
    <molecule id="Q6P4F1-1"/>
    <property type="protein sequence ID" value="ENSP00000332757.5"/>
    <property type="gene ID" value="ENSG00000172728.16"/>
</dbReference>
<dbReference type="Ensembl" id="ENST00000518672.5">
    <molecule id="Q6P4F1-6"/>
    <property type="protein sequence ID" value="ENSP00000430428.1"/>
    <property type="gene ID" value="ENSG00000172728.16"/>
</dbReference>
<dbReference type="Ensembl" id="ENST00000524021.1">
    <molecule id="Q6P4F1-6"/>
    <property type="protein sequence ID" value="ENSP00000429870.1"/>
    <property type="gene ID" value="ENSG00000172728.16"/>
</dbReference>
<dbReference type="GeneID" id="84750"/>
<dbReference type="KEGG" id="hsa:84750"/>
<dbReference type="MANE-Select" id="ENST00000327671.10">
    <property type="protein sequence ID" value="ENSP00000332757.5"/>
    <property type="RefSeq nucleotide sequence ID" value="NM_032664.3"/>
    <property type="RefSeq protein sequence ID" value="NP_116053.3"/>
</dbReference>
<dbReference type="UCSC" id="uc003xjd.4">
    <molecule id="Q6P4F1-1"/>
    <property type="organism name" value="human"/>
</dbReference>
<dbReference type="AGR" id="HGNC:19234"/>
<dbReference type="CTD" id="84750"/>
<dbReference type="DisGeNET" id="84750"/>
<dbReference type="GeneCards" id="FUT10"/>
<dbReference type="HGNC" id="HGNC:19234">
    <property type="gene designation" value="FUT10"/>
</dbReference>
<dbReference type="HPA" id="ENSG00000172728">
    <property type="expression patterns" value="Low tissue specificity"/>
</dbReference>
<dbReference type="neXtProt" id="NX_Q6P4F1"/>
<dbReference type="OpenTargets" id="ENSG00000172728"/>
<dbReference type="PharmGKB" id="PA134872572"/>
<dbReference type="VEuPathDB" id="HostDB:ENSG00000172728"/>
<dbReference type="eggNOG" id="KOG2619">
    <property type="taxonomic scope" value="Eukaryota"/>
</dbReference>
<dbReference type="GeneTree" id="ENSGT00940000160287"/>
<dbReference type="HOGENOM" id="CLU_032075_0_2_1"/>
<dbReference type="InParanoid" id="Q6P4F1"/>
<dbReference type="OMA" id="IRQLDYD"/>
<dbReference type="OrthoDB" id="9993460at2759"/>
<dbReference type="PAN-GO" id="Q6P4F1">
    <property type="GO annotations" value="2 GO annotations based on evolutionary models"/>
</dbReference>
<dbReference type="PhylomeDB" id="Q6P4F1"/>
<dbReference type="TreeFam" id="TF316348"/>
<dbReference type="BRENDA" id="2.4.1.65">
    <property type="organism ID" value="2681"/>
</dbReference>
<dbReference type="PathwayCommons" id="Q6P4F1"/>
<dbReference type="Reactome" id="R-HSA-9037629">
    <property type="pathway name" value="Lewis blood group biosynthesis"/>
</dbReference>
<dbReference type="SignaLink" id="Q6P4F1"/>
<dbReference type="UniPathway" id="UPA00378"/>
<dbReference type="BioGRID-ORCS" id="84750">
    <property type="hits" value="9 hits in 1153 CRISPR screens"/>
</dbReference>
<dbReference type="ChiTaRS" id="FUT10">
    <property type="organism name" value="human"/>
</dbReference>
<dbReference type="GenomeRNAi" id="84750"/>
<dbReference type="Pharos" id="Q6P4F1">
    <property type="development level" value="Tdark"/>
</dbReference>
<dbReference type="PRO" id="PR:Q6P4F1"/>
<dbReference type="Proteomes" id="UP000005640">
    <property type="component" value="Chromosome 8"/>
</dbReference>
<dbReference type="RNAct" id="Q6P4F1">
    <property type="molecule type" value="protein"/>
</dbReference>
<dbReference type="Bgee" id="ENSG00000172728">
    <property type="expression patterns" value="Expressed in pancreatic ductal cell and 123 other cell types or tissues"/>
</dbReference>
<dbReference type="GO" id="GO:0005783">
    <property type="term" value="C:endoplasmic reticulum"/>
    <property type="evidence" value="ECO:0000314"/>
    <property type="project" value="HPA"/>
</dbReference>
<dbReference type="GO" id="GO:0005789">
    <property type="term" value="C:endoplasmic reticulum membrane"/>
    <property type="evidence" value="ECO:0007669"/>
    <property type="project" value="UniProtKB-SubCell"/>
</dbReference>
<dbReference type="GO" id="GO:0005794">
    <property type="term" value="C:Golgi apparatus"/>
    <property type="evidence" value="ECO:0000314"/>
    <property type="project" value="HPA"/>
</dbReference>
<dbReference type="GO" id="GO:0000139">
    <property type="term" value="C:Golgi membrane"/>
    <property type="evidence" value="ECO:0007669"/>
    <property type="project" value="UniProtKB-SubCell"/>
</dbReference>
<dbReference type="GO" id="GO:0005764">
    <property type="term" value="C:lysosome"/>
    <property type="evidence" value="ECO:0007669"/>
    <property type="project" value="UniProtKB-SubCell"/>
</dbReference>
<dbReference type="GO" id="GO:0005654">
    <property type="term" value="C:nucleoplasm"/>
    <property type="evidence" value="ECO:0000314"/>
    <property type="project" value="HPA"/>
</dbReference>
<dbReference type="GO" id="GO:0046920">
    <property type="term" value="F:alpha-(1-&gt;3)-fucosyltransferase activity"/>
    <property type="evidence" value="ECO:0000318"/>
    <property type="project" value="GO_Central"/>
</dbReference>
<dbReference type="GO" id="GO:0008417">
    <property type="term" value="F:fucosyltransferase activity"/>
    <property type="evidence" value="ECO:0000314"/>
    <property type="project" value="UniProtKB"/>
</dbReference>
<dbReference type="GO" id="GO:0046922">
    <property type="term" value="F:peptide-O-fucosyltransferase activity"/>
    <property type="evidence" value="ECO:0000314"/>
    <property type="project" value="UniProtKB"/>
</dbReference>
<dbReference type="GO" id="GO:0021799">
    <property type="term" value="P:cerebral cortex radially oriented cell migration"/>
    <property type="evidence" value="ECO:0007669"/>
    <property type="project" value="Ensembl"/>
</dbReference>
<dbReference type="GO" id="GO:0009566">
    <property type="term" value="P:fertilization"/>
    <property type="evidence" value="ECO:0000303"/>
    <property type="project" value="UniProtKB"/>
</dbReference>
<dbReference type="GO" id="GO:0036065">
    <property type="term" value="P:fucosylation"/>
    <property type="evidence" value="ECO:0000318"/>
    <property type="project" value="GO_Central"/>
</dbReference>
<dbReference type="GO" id="GO:0030097">
    <property type="term" value="P:hemopoiesis"/>
    <property type="evidence" value="ECO:0000303"/>
    <property type="project" value="UniProtKB"/>
</dbReference>
<dbReference type="GO" id="GO:0042355">
    <property type="term" value="P:L-fucose catabolic process"/>
    <property type="evidence" value="ECO:0000303"/>
    <property type="project" value="UniProtKB"/>
</dbReference>
<dbReference type="GO" id="GO:0036071">
    <property type="term" value="P:N-glycan fucosylation"/>
    <property type="evidence" value="ECO:0000314"/>
    <property type="project" value="UniProtKB"/>
</dbReference>
<dbReference type="GO" id="GO:0007399">
    <property type="term" value="P:nervous system development"/>
    <property type="evidence" value="ECO:0000303"/>
    <property type="project" value="UniProtKB"/>
</dbReference>
<dbReference type="GO" id="GO:0097402">
    <property type="term" value="P:neuroblast migration"/>
    <property type="evidence" value="ECO:0007669"/>
    <property type="project" value="Ensembl"/>
</dbReference>
<dbReference type="GO" id="GO:0036445">
    <property type="term" value="P:neuronal stem cell division"/>
    <property type="evidence" value="ECO:0000250"/>
    <property type="project" value="UniProtKB"/>
</dbReference>
<dbReference type="GO" id="GO:0097150">
    <property type="term" value="P:neuronal stem cell population maintenance"/>
    <property type="evidence" value="ECO:0007669"/>
    <property type="project" value="Ensembl"/>
</dbReference>
<dbReference type="GO" id="GO:0009312">
    <property type="term" value="P:oligosaccharide biosynthetic process"/>
    <property type="evidence" value="ECO:0007669"/>
    <property type="project" value="Ensembl"/>
</dbReference>
<dbReference type="GO" id="GO:0050714">
    <property type="term" value="P:positive regulation of protein secretion"/>
    <property type="evidence" value="ECO:0000314"/>
    <property type="project" value="UniProtKB"/>
</dbReference>
<dbReference type="GO" id="GO:0006457">
    <property type="term" value="P:protein folding"/>
    <property type="evidence" value="ECO:0000303"/>
    <property type="project" value="UniProtKB"/>
</dbReference>
<dbReference type="GO" id="GO:0006486">
    <property type="term" value="P:protein glycosylation"/>
    <property type="evidence" value="ECO:0000304"/>
    <property type="project" value="UniProtKB"/>
</dbReference>
<dbReference type="GO" id="GO:0006605">
    <property type="term" value="P:protein targeting"/>
    <property type="evidence" value="ECO:0000303"/>
    <property type="project" value="UniProtKB"/>
</dbReference>
<dbReference type="GO" id="GO:0042060">
    <property type="term" value="P:wound healing"/>
    <property type="evidence" value="ECO:0000303"/>
    <property type="project" value="UniProtKB"/>
</dbReference>
<dbReference type="FunFam" id="3.40.50.11660:FF:000002">
    <property type="entry name" value="Alpha-(1,3)-fucosyltransferase"/>
    <property type="match status" value="1"/>
</dbReference>
<dbReference type="Gene3D" id="3.40.50.11660">
    <property type="entry name" value="Glycosyl transferase family 10, C-terminal domain"/>
    <property type="match status" value="1"/>
</dbReference>
<dbReference type="InterPro" id="IPR017176">
    <property type="entry name" value="Alpha-1_3-FUT_met"/>
</dbReference>
<dbReference type="InterPro" id="IPR055270">
    <property type="entry name" value="Glyco_tran_10_C"/>
</dbReference>
<dbReference type="InterPro" id="IPR031481">
    <property type="entry name" value="Glyco_tran_10_N"/>
</dbReference>
<dbReference type="InterPro" id="IPR001503">
    <property type="entry name" value="Glyco_trans_10"/>
</dbReference>
<dbReference type="InterPro" id="IPR038577">
    <property type="entry name" value="GT10-like_C_sf"/>
</dbReference>
<dbReference type="PANTHER" id="PTHR11929">
    <property type="entry name" value="ALPHA- 1,3 -FUCOSYLTRANSFERASE"/>
    <property type="match status" value="1"/>
</dbReference>
<dbReference type="PANTHER" id="PTHR11929:SF194">
    <property type="entry name" value="ALPHA-(1,3)-FUCOSYLTRANSFERASE 10"/>
    <property type="match status" value="1"/>
</dbReference>
<dbReference type="Pfam" id="PF17039">
    <property type="entry name" value="Glyco_tran_10_N"/>
    <property type="match status" value="1"/>
</dbReference>
<dbReference type="Pfam" id="PF00852">
    <property type="entry name" value="Glyco_transf_10"/>
    <property type="match status" value="1"/>
</dbReference>
<dbReference type="PIRSF" id="PIRSF037332">
    <property type="entry name" value="Alpha1_3FUT_met"/>
    <property type="match status" value="1"/>
</dbReference>
<dbReference type="SUPFAM" id="SSF53756">
    <property type="entry name" value="UDP-Glycosyltransferase/glycogen phosphorylase"/>
    <property type="match status" value="1"/>
</dbReference>
<feature type="chain" id="PRO_0000299002" description="GDP-fucose protein O-fucosyltransferase 3">
    <location>
        <begin position="1"/>
        <end position="479"/>
    </location>
</feature>
<feature type="topological domain" description="Cytoplasmic" evidence="3">
    <location>
        <begin position="1"/>
        <end position="8"/>
    </location>
</feature>
<feature type="transmembrane region" description="Helical; Signal-anchor for type II membrane protein" evidence="3">
    <location>
        <begin position="9"/>
        <end position="31"/>
    </location>
</feature>
<feature type="topological domain" description="Lumenal" evidence="3">
    <location>
        <begin position="32"/>
        <end position="479"/>
    </location>
</feature>
<feature type="glycosylation site" description="N-linked (GlcNAc...) asparagine" evidence="3">
    <location>
        <position position="110"/>
    </location>
</feature>
<feature type="glycosylation site" description="N-linked (GlcNAc...) asparagine" evidence="3">
    <location>
        <position position="168"/>
    </location>
</feature>
<feature type="disulfide bond" evidence="1">
    <location>
        <begin position="389"/>
        <end position="392"/>
    </location>
</feature>
<feature type="splice variant" id="VSP_027498" description="In isoform 3." evidence="12">
    <location>
        <begin position="1"/>
        <end position="62"/>
    </location>
</feature>
<feature type="splice variant" id="VSP_027499" description="In isoform 7." evidence="9">
    <location>
        <begin position="1"/>
        <end position="51"/>
    </location>
</feature>
<feature type="splice variant" id="VSP_027500" description="In isoform 4 and isoform 6." evidence="8 12">
    <location>
        <begin position="1"/>
        <end position="28"/>
    </location>
</feature>
<feature type="splice variant" id="VSP_027501" description="In isoform 2." evidence="9">
    <original>Q</original>
    <variation>ALDTVENLMKVTGPPQGVTDSMQCFNDQRPLSNTRSSEHIKE</variation>
    <location>
        <position position="27"/>
    </location>
</feature>
<feature type="splice variant" id="VSP_027502" description="In isoform 3." evidence="12">
    <original>LKKEGLTFNRKRKWELDSYPIMLWWSPLTGETGRLGQCGADACFFTINRTYLHHHMTKAFLFYG</original>
    <variation>MGIGQLPHYALVVPADGGDWEVRPMWSRCLFLHHQPDLPPSSHDQSIPLLWSQEESPPLAENDG</variation>
    <location>
        <begin position="63"/>
        <end position="126"/>
    </location>
</feature>
<feature type="splice variant" id="VSP_027503" description="In isoform 7." evidence="9">
    <original>TDFNIDSLPLPRKAHHD</original>
    <variation>KQDFRLSPLFAVVFLQS</variation>
    <location>
        <begin position="127"/>
        <end position="143"/>
    </location>
</feature>
<feature type="splice variant" id="VSP_027504" description="In isoform 7." evidence="9">
    <location>
        <begin position="144"/>
        <end position="479"/>
    </location>
</feature>
<feature type="splice variant" id="VSP_027505" description="In isoform 3, isoform 4 and isoform 5." evidence="12">
    <original>GLPPKRWEAEDTHLS</original>
    <variation>VSKSKVGIEPAGWPS</variation>
    <location>
        <begin position="405"/>
        <end position="419"/>
    </location>
</feature>
<feature type="splice variant" id="VSP_027506" description="In isoform 3, isoform 4 and isoform 5." evidence="12">
    <location>
        <begin position="420"/>
        <end position="479"/>
    </location>
</feature>
<feature type="sequence variant" id="VAR_034759" description="In dbSNP:rs16880994." evidence="4">
    <original>L</original>
    <variation>F</variation>
    <location>
        <position position="59"/>
    </location>
</feature>
<feature type="sequence variant" id="VAR_034760" description="In dbSNP:rs16880853.">
    <original>Y</original>
    <variation>H</variation>
    <location>
        <position position="268"/>
    </location>
</feature>
<feature type="sequence variant" id="VAR_034761" description="In dbSNP:rs17855838." evidence="4 5">
    <original>L</original>
    <variation>V</variation>
    <location>
        <position position="368"/>
    </location>
</feature>
<feature type="sequence variant" id="VAR_034762" description="In dbSNP:rs17855839." evidence="5">
    <original>R</original>
    <variation>P</variation>
    <location>
        <position position="371"/>
    </location>
</feature>
<protein>
    <recommendedName>
        <fullName evidence="13">GDP-fucose protein O-fucosyltransferase 3</fullName>
        <ecNumber evidence="7">2.4.1.221</ecNumber>
    </recommendedName>
    <alternativeName>
        <fullName>Alpha-(1,3)-fucosyltransferase 10</fullName>
        <ecNumber evidence="6">2.4.1.-</ecNumber>
    </alternativeName>
    <alternativeName>
        <fullName>Fucosyltransferase X</fullName>
        <shortName>Fuc-TX</shortName>
        <shortName>FucT-X</shortName>
    </alternativeName>
    <alternativeName>
        <fullName>Galactoside 3-L-fucosyltransferase 10</fullName>
        <shortName>Fucosyltransferase 10</shortName>
    </alternativeName>
</protein>
<comment type="function">
    <text evidence="2 6 7">Protein O-fucosyltransferase that specifically catalyzes O-fucosylation of serine or threonine residues in EMI domains of target proteins, such as MMRN1, MMRN2 and EMID1 (PubMed:39775168). Attaches fucose through an O-glycosidic linkage (PubMed:39775168). O-fucosylation of EMI domain-containing proteins may be required for facilitating protein folding and secretion (PubMed:39775168). May also show alpha-(1,3)-fucosyltransferase activity toward the innermost N-acetyl glucosamine (GlcNAc) residue in biantennary N-glycan acceptors (PubMed:19088067). However, this was tested with a library of synthetic substrates and this activity is unsure in vivo (PubMed:19088067). May be involved in biosynthesis of Lewis X-carrying biantennary N-glycans that regulate neuron stem cell self-renewal during brain development (By similarity).</text>
</comment>
<comment type="catalytic activity">
    <reaction evidence="7">
        <text>L-threonyl-[protein] + GDP-beta-L-fucose = 3-O-(alpha-L-fucosyl)-L-threonyl-[protein] + GDP + H(+)</text>
        <dbReference type="Rhea" id="RHEA:70491"/>
        <dbReference type="Rhea" id="RHEA-COMP:11060"/>
        <dbReference type="Rhea" id="RHEA-COMP:17915"/>
        <dbReference type="ChEBI" id="CHEBI:15378"/>
        <dbReference type="ChEBI" id="CHEBI:30013"/>
        <dbReference type="ChEBI" id="CHEBI:57273"/>
        <dbReference type="ChEBI" id="CHEBI:58189"/>
        <dbReference type="ChEBI" id="CHEBI:189631"/>
        <dbReference type="EC" id="2.4.1.221"/>
    </reaction>
    <physiologicalReaction direction="left-to-right" evidence="7">
        <dbReference type="Rhea" id="RHEA:70492"/>
    </physiologicalReaction>
</comment>
<comment type="catalytic activity">
    <reaction evidence="7">
        <text>L-seryl-[protein] + GDP-beta-L-fucose = 3-O-(alpha-L-fucosyl)-L-seryl-[protein] + GDP + H(+)</text>
        <dbReference type="Rhea" id="RHEA:63644"/>
        <dbReference type="Rhea" id="RHEA-COMP:9863"/>
        <dbReference type="Rhea" id="RHEA-COMP:17914"/>
        <dbReference type="ChEBI" id="CHEBI:15378"/>
        <dbReference type="ChEBI" id="CHEBI:29999"/>
        <dbReference type="ChEBI" id="CHEBI:57273"/>
        <dbReference type="ChEBI" id="CHEBI:58189"/>
        <dbReference type="ChEBI" id="CHEBI:189632"/>
        <dbReference type="EC" id="2.4.1.221"/>
    </reaction>
    <physiologicalReaction direction="left-to-right" evidence="7">
        <dbReference type="Rhea" id="RHEA:63645"/>
    </physiologicalReaction>
</comment>
<comment type="biophysicochemical properties">
    <kinetics>
        <KM evidence="7">36.81 uM for Thr-216 of MMRN1 protein</KM>
        <KM evidence="7">17.47 uM for Thr-265 of MMRN1 protein</KM>
        <Vmax evidence="7">280.4 nmol/min/mg enzyme with Thr-216 of MMRN1 protein as substrate</Vmax>
        <Vmax evidence="7">73.58 nmol/min/mg enzyme with Thr-265 of MMRN1 protein as substrate</Vmax>
    </kinetics>
</comment>
<comment type="biophysicochemical properties">
    <molecule>Isoform 1</molecule>
    <kinetics>
        <KM evidence="6">15 uM for GDP-beta-L-fucose</KM>
        <Vmax evidence="6">146.0 pmol/h/mg enzyme toward GDP-beta-L-fucose</Vmax>
    </kinetics>
</comment>
<comment type="biophysicochemical properties">
    <molecule>Isoform 4</molecule>
    <kinetics>
        <KM evidence="6">13 uM for GDP-beta-L-fucose</KM>
        <Vmax evidence="6">285.0 pmol/h/mg enzyme toward GDP-beta-L-fucose</Vmax>
    </kinetics>
</comment>
<comment type="pathway">
    <text evidence="6 7">Protein modification; protein glycosylation.</text>
</comment>
<comment type="subcellular location">
    <subcellularLocation>
        <location evidence="7">Endoplasmic reticulum membrane</location>
        <topology evidence="3">Single-pass type II membrane protein</topology>
    </subcellularLocation>
</comment>
<comment type="subcellular location">
    <molecule>Isoform 1</molecule>
    <subcellularLocation>
        <location evidence="15">Endoplasmic reticulum membrane</location>
        <topology evidence="3">Single-pass type II membrane protein</topology>
    </subcellularLocation>
    <subcellularLocation>
        <location evidence="14 15">Golgi apparatus membrane</location>
        <topology evidence="3">Single-pass type II membrane protein</topology>
    </subcellularLocation>
</comment>
<comment type="subcellular location">
    <molecule>Isoform 4</molecule>
    <subcellularLocation>
        <location evidence="6">Golgi apparatus</location>
    </subcellularLocation>
    <subcellularLocation>
        <location evidence="6">Lysosome</location>
    </subcellularLocation>
</comment>
<comment type="subcellular location">
    <molecule>Isoform 5</molecule>
    <subcellularLocation>
        <location evidence="6">Endoplasmic reticulum membrane</location>
        <topology evidence="3">Single-pass type II membrane protein</topology>
    </subcellularLocation>
    <subcellularLocation>
        <location evidence="15">Golgi apparatus membrane</location>
        <topology evidence="3">Single-pass type II membrane protein</topology>
    </subcellularLocation>
</comment>
<comment type="alternative products">
    <event type="alternative splicing"/>
    <isoform>
        <id>Q6P4F1-1</id>
        <name>1</name>
        <sequence type="displayed"/>
    </isoform>
    <isoform>
        <id>Q6P4F1-2</id>
        <name>2</name>
        <sequence type="described" ref="VSP_027501"/>
    </isoform>
    <isoform>
        <id>Q6P4F1-3</id>
        <name>3</name>
        <sequence type="described" ref="VSP_027498 VSP_027502 VSP_027505 VSP_027506"/>
    </isoform>
    <isoform>
        <id>Q6P4F1-4</id>
        <name>4</name>
        <sequence type="described" ref="VSP_027500 VSP_027505 VSP_027506"/>
    </isoform>
    <isoform>
        <id>Q6P4F1-5</id>
        <name>5</name>
        <sequence type="described" ref="VSP_027505 VSP_027506"/>
    </isoform>
    <isoform>
        <id>Q6P4F1-6</id>
        <name>6</name>
        <sequence type="described" ref="VSP_027500"/>
    </isoform>
    <isoform>
        <id>Q6P4F1-7</id>
        <name>7</name>
        <sequence type="described" ref="VSP_027499 VSP_027503 VSP_027504"/>
    </isoform>
</comment>
<comment type="tissue specificity">
    <text evidence="6">Expressed in lung, digestive tract, gall bladder, placenta, kidney, uterus and brain. Not detected in spleen, heart, muscle, liver and pancreas.</text>
</comment>
<comment type="developmental stage">
    <text evidence="6">Expressed in fetal tissues including skin, small intestine, liver, kidney, lung, muscle, heart and brain.</text>
</comment>
<comment type="developmental stage">
    <molecule>Isoform 4</molecule>
    <text evidence="6">Expressed in 50 day old embryo.</text>
</comment>
<comment type="developmental stage">
    <molecule>Isoform 5</molecule>
    <text evidence="6">Expressed in 50 day old embryo.</text>
</comment>
<comment type="similarity">
    <text evidence="13">Belongs to the glycosyltransferase 10 family.</text>
</comment>
<comment type="sequence caution" evidence="13">
    <conflict type="erroneous initiation">
        <sequence resource="EMBL-CDS" id="CAD24023"/>
    </conflict>
</comment>
<organism>
    <name type="scientific">Homo sapiens</name>
    <name type="common">Human</name>
    <dbReference type="NCBI Taxonomy" id="9606"/>
    <lineage>
        <taxon>Eukaryota</taxon>
        <taxon>Metazoa</taxon>
        <taxon>Chordata</taxon>
        <taxon>Craniata</taxon>
        <taxon>Vertebrata</taxon>
        <taxon>Euteleostomi</taxon>
        <taxon>Mammalia</taxon>
        <taxon>Eutheria</taxon>
        <taxon>Euarchontoglires</taxon>
        <taxon>Primates</taxon>
        <taxon>Haplorrhini</taxon>
        <taxon>Catarrhini</taxon>
        <taxon>Hominidae</taxon>
        <taxon>Homo</taxon>
    </lineage>
</organism>
<name>OFUT3_HUMAN</name>
<reference key="1">
    <citation type="journal article" date="2002" name="J. Biol. Chem.">
        <title>Composition of Drosophila melanogaster proteome involved in fucosylated glycan metabolism.</title>
        <authorList>
            <person name="Roos C."/>
            <person name="Kolmer M."/>
            <person name="Mattila P."/>
            <person name="Renkonen R."/>
        </authorList>
    </citation>
    <scope>NUCLEOTIDE SEQUENCE [MRNA] (ISOFORM 6)</scope>
    <scope>VARIANTS PHE-59 AND VAL-368</scope>
    <source>
        <tissue>Brain</tissue>
    </source>
</reference>
<reference key="2">
    <citation type="submission" date="2003-09" db="EMBL/GenBank/DDBJ databases">
        <title>Cloning, expression and genomic organization of two new human alpha3-fucosyltransferases (FUT10 and FUT11).</title>
        <authorList>
            <person name="Martinez-Duncker I."/>
            <person name="Candelier J.-J."/>
            <person name="Oriol R."/>
            <person name="Mollicone R."/>
        </authorList>
    </citation>
    <scope>NUCLEOTIDE SEQUENCE [MRNA] (ISOFORMS 1; 3; 4 AND 5)</scope>
</reference>
<reference key="3">
    <citation type="journal article" date="2004" name="Nat. Genet.">
        <title>Complete sequencing and characterization of 21,243 full-length human cDNAs.</title>
        <authorList>
            <person name="Ota T."/>
            <person name="Suzuki Y."/>
            <person name="Nishikawa T."/>
            <person name="Otsuki T."/>
            <person name="Sugiyama T."/>
            <person name="Irie R."/>
            <person name="Wakamatsu A."/>
            <person name="Hayashi K."/>
            <person name="Sato H."/>
            <person name="Nagai K."/>
            <person name="Kimura K."/>
            <person name="Makita H."/>
            <person name="Sekine M."/>
            <person name="Obayashi M."/>
            <person name="Nishi T."/>
            <person name="Shibahara T."/>
            <person name="Tanaka T."/>
            <person name="Ishii S."/>
            <person name="Yamamoto J."/>
            <person name="Saito K."/>
            <person name="Kawai Y."/>
            <person name="Isono Y."/>
            <person name="Nakamura Y."/>
            <person name="Nagahari K."/>
            <person name="Murakami K."/>
            <person name="Yasuda T."/>
            <person name="Iwayanagi T."/>
            <person name="Wagatsuma M."/>
            <person name="Shiratori A."/>
            <person name="Sudo H."/>
            <person name="Hosoiri T."/>
            <person name="Kaku Y."/>
            <person name="Kodaira H."/>
            <person name="Kondo H."/>
            <person name="Sugawara M."/>
            <person name="Takahashi M."/>
            <person name="Kanda K."/>
            <person name="Yokoi T."/>
            <person name="Furuya T."/>
            <person name="Kikkawa E."/>
            <person name="Omura Y."/>
            <person name="Abe K."/>
            <person name="Kamihara K."/>
            <person name="Katsuta N."/>
            <person name="Sato K."/>
            <person name="Tanikawa M."/>
            <person name="Yamazaki M."/>
            <person name="Ninomiya K."/>
            <person name="Ishibashi T."/>
            <person name="Yamashita H."/>
            <person name="Murakawa K."/>
            <person name="Fujimori K."/>
            <person name="Tanai H."/>
            <person name="Kimata M."/>
            <person name="Watanabe M."/>
            <person name="Hiraoka S."/>
            <person name="Chiba Y."/>
            <person name="Ishida S."/>
            <person name="Ono Y."/>
            <person name="Takiguchi S."/>
            <person name="Watanabe S."/>
            <person name="Yosida M."/>
            <person name="Hotuta T."/>
            <person name="Kusano J."/>
            <person name="Kanehori K."/>
            <person name="Takahashi-Fujii A."/>
            <person name="Hara H."/>
            <person name="Tanase T.-O."/>
            <person name="Nomura Y."/>
            <person name="Togiya S."/>
            <person name="Komai F."/>
            <person name="Hara R."/>
            <person name="Takeuchi K."/>
            <person name="Arita M."/>
            <person name="Imose N."/>
            <person name="Musashino K."/>
            <person name="Yuuki H."/>
            <person name="Oshima A."/>
            <person name="Sasaki N."/>
            <person name="Aotsuka S."/>
            <person name="Yoshikawa Y."/>
            <person name="Matsunawa H."/>
            <person name="Ichihara T."/>
            <person name="Shiohata N."/>
            <person name="Sano S."/>
            <person name="Moriya S."/>
            <person name="Momiyama H."/>
            <person name="Satoh N."/>
            <person name="Takami S."/>
            <person name="Terashima Y."/>
            <person name="Suzuki O."/>
            <person name="Nakagawa S."/>
            <person name="Senoh A."/>
            <person name="Mizoguchi H."/>
            <person name="Goto Y."/>
            <person name="Shimizu F."/>
            <person name="Wakebe H."/>
            <person name="Hishigaki H."/>
            <person name="Watanabe T."/>
            <person name="Sugiyama A."/>
            <person name="Takemoto M."/>
            <person name="Kawakami B."/>
            <person name="Yamazaki M."/>
            <person name="Watanabe K."/>
            <person name="Kumagai A."/>
            <person name="Itakura S."/>
            <person name="Fukuzumi Y."/>
            <person name="Fujimori Y."/>
            <person name="Komiyama M."/>
            <person name="Tashiro H."/>
            <person name="Tanigami A."/>
            <person name="Fujiwara T."/>
            <person name="Ono T."/>
            <person name="Yamada K."/>
            <person name="Fujii Y."/>
            <person name="Ozaki K."/>
            <person name="Hirao M."/>
            <person name="Ohmori Y."/>
            <person name="Kawabata A."/>
            <person name="Hikiji T."/>
            <person name="Kobatake N."/>
            <person name="Inagaki H."/>
            <person name="Ikema Y."/>
            <person name="Okamoto S."/>
            <person name="Okitani R."/>
            <person name="Kawakami T."/>
            <person name="Noguchi S."/>
            <person name="Itoh T."/>
            <person name="Shigeta K."/>
            <person name="Senba T."/>
            <person name="Matsumura K."/>
            <person name="Nakajima Y."/>
            <person name="Mizuno T."/>
            <person name="Morinaga M."/>
            <person name="Sasaki M."/>
            <person name="Togashi T."/>
            <person name="Oyama M."/>
            <person name="Hata H."/>
            <person name="Watanabe M."/>
            <person name="Komatsu T."/>
            <person name="Mizushima-Sugano J."/>
            <person name="Satoh T."/>
            <person name="Shirai Y."/>
            <person name="Takahashi Y."/>
            <person name="Nakagawa K."/>
            <person name="Okumura K."/>
            <person name="Nagase T."/>
            <person name="Nomura N."/>
            <person name="Kikuchi H."/>
            <person name="Masuho Y."/>
            <person name="Yamashita R."/>
            <person name="Nakai K."/>
            <person name="Yada T."/>
            <person name="Nakamura Y."/>
            <person name="Ohara O."/>
            <person name="Isogai T."/>
            <person name="Sugano S."/>
        </authorList>
    </citation>
    <scope>NUCLEOTIDE SEQUENCE [LARGE SCALE MRNA] (ISOFORM 1)</scope>
    <source>
        <tissue>Trachea</tissue>
    </source>
</reference>
<reference key="4">
    <citation type="submission" date="2005-09" db="EMBL/GenBank/DDBJ databases">
        <authorList>
            <person name="Mural R.J."/>
            <person name="Istrail S."/>
            <person name="Sutton G.G."/>
            <person name="Florea L."/>
            <person name="Halpern A.L."/>
            <person name="Mobarry C.M."/>
            <person name="Lippert R."/>
            <person name="Walenz B."/>
            <person name="Shatkay H."/>
            <person name="Dew I."/>
            <person name="Miller J.R."/>
            <person name="Flanigan M.J."/>
            <person name="Edwards N.J."/>
            <person name="Bolanos R."/>
            <person name="Fasulo D."/>
            <person name="Halldorsson B.V."/>
            <person name="Hannenhalli S."/>
            <person name="Turner R."/>
            <person name="Yooseph S."/>
            <person name="Lu F."/>
            <person name="Nusskern D.R."/>
            <person name="Shue B.C."/>
            <person name="Zheng X.H."/>
            <person name="Zhong F."/>
            <person name="Delcher A.L."/>
            <person name="Huson D.H."/>
            <person name="Kravitz S.A."/>
            <person name="Mouchard L."/>
            <person name="Reinert K."/>
            <person name="Remington K.A."/>
            <person name="Clark A.G."/>
            <person name="Waterman M.S."/>
            <person name="Eichler E.E."/>
            <person name="Adams M.D."/>
            <person name="Hunkapiller M.W."/>
            <person name="Myers E.W."/>
            <person name="Venter J.C."/>
        </authorList>
    </citation>
    <scope>NUCLEOTIDE SEQUENCE [LARGE SCALE GENOMIC DNA]</scope>
</reference>
<reference key="5">
    <citation type="journal article" date="2004" name="Genome Res.">
        <title>The status, quality, and expansion of the NIH full-length cDNA project: the Mammalian Gene Collection (MGC).</title>
        <authorList>
            <consortium name="The MGC Project Team"/>
        </authorList>
    </citation>
    <scope>NUCLEOTIDE SEQUENCE [LARGE SCALE MRNA] (ISOFORMS 2 AND 7)</scope>
    <scope>VARIANTS VAL-368 AND PRO-371</scope>
    <source>
        <tissue>Brain</tissue>
        <tissue>Ovary</tissue>
    </source>
</reference>
<reference key="6">
    <citation type="journal article" date="2002" name="Mamm. Genome">
        <title>Comparison of human and mouse Fuc-TX and Fuc-TXI genes, and expression studies in the mouse.</title>
        <authorList>
            <person name="Baboval T."/>
            <person name="Smith F.I."/>
        </authorList>
    </citation>
    <scope>SUBCELLULAR LOCATION (ISOFORM 1)</scope>
</reference>
<reference key="7">
    <citation type="journal article" date="2009" name="J. Biol. Chem.">
        <title>Activity, splice variants, conserved peptide motifs, and phylogeny of two new alpha1,3-fucosyltransferase families (FUT10 and FUT11).</title>
        <authorList>
            <person name="Mollicone R."/>
            <person name="Moore S.E."/>
            <person name="Bovin N."/>
            <person name="Garcia-Rosasco M."/>
            <person name="Candelier J.J."/>
            <person name="Martinez-Duncker I."/>
            <person name="Oriol R."/>
        </authorList>
    </citation>
    <scope>FUNCTIOND</scope>
    <scope>BIOPHYSICOCHEMICAL PROPERTIES (ISOFORMS 1 AND 4)</scope>
    <scope>PATHWAY</scope>
    <scope>SUBCELLULAR LOCATION (ISOFORMS 1; 4 AND 5)</scope>
    <scope>TISSUE SPECIFICITY</scope>
    <scope>DEVELOPMENTAL STAGE (ISOFORMS 4 AND 5)</scope>
</reference>
<reference key="8">
    <citation type="journal article" date="2025" name="Nat. Chem. Biol.">
        <title>FUT10 and FUT11 are protein O-fucosyltransferases that modify protein EMI domains.</title>
        <authorList>
            <person name="Hao H."/>
            <person name="Yuan Y."/>
            <person name="Ito A."/>
            <person name="Eberand B.M."/>
            <person name="Tjondro H."/>
            <person name="Cielesh M."/>
            <person name="Norris N."/>
            <person name="Moreno C.L."/>
            <person name="Maxwell J.W.C."/>
            <person name="Neely G.G."/>
            <person name="Payne R.J."/>
            <person name="Kebede M.A."/>
            <person name="Urbauer R.J.B."/>
            <person name="Passam F.H."/>
            <person name="Larance M."/>
            <person name="Haltiwanger R.S."/>
        </authorList>
    </citation>
    <scope>FUNCTION</scope>
    <scope>CATALYTIC ACTIVITY</scope>
    <scope>BIOPHYSICOCHEMICAL PROPERTIES</scope>
    <scope>PATHWAY</scope>
    <scope>SUBCELLULAR LOCATION</scope>
</reference>
<proteinExistence type="evidence at protein level"/>